<evidence type="ECO:0000255" key="1">
    <source>
        <dbReference type="HAMAP-Rule" id="MF_00135"/>
    </source>
</evidence>
<keyword id="KW-0028">Amino-acid biosynthesis</keyword>
<keyword id="KW-0057">Aromatic amino acid biosynthesis</keyword>
<keyword id="KW-0413">Isomerase</keyword>
<keyword id="KW-0822">Tryptophan biosynthesis</keyword>
<proteinExistence type="inferred from homology"/>
<organism>
    <name type="scientific">Methanococcus aeolicus (strain ATCC BAA-1280 / DSM 17508 / OCM 812 / Nankai-3)</name>
    <dbReference type="NCBI Taxonomy" id="419665"/>
    <lineage>
        <taxon>Archaea</taxon>
        <taxon>Methanobacteriati</taxon>
        <taxon>Methanobacteriota</taxon>
        <taxon>Methanomada group</taxon>
        <taxon>Methanococci</taxon>
        <taxon>Methanococcales</taxon>
        <taxon>Methanococcaceae</taxon>
        <taxon>Methanococcus</taxon>
    </lineage>
</organism>
<sequence>MFIKICGIKTVEELKIVEKYADATGVILKSTSKREISFEKAKELIEIAKIPIYAVSTVNTYDDWAKIIEKTGTKYIQIHSNMDLNEIIKLKNNYNVNIIKAFKVPSISPNPEKDAENLINDIMQYDNIVDKILLDTGKGTGKTHDLRISKILSEKIDIVLAGGLNPYNVKEIVEIIKPCGVDLSSGVEKDNKKDEELIKLFIKNLKYNDK</sequence>
<dbReference type="EC" id="5.3.1.24" evidence="1"/>
<dbReference type="EMBL" id="CP000743">
    <property type="protein sequence ID" value="ABR56696.1"/>
    <property type="molecule type" value="Genomic_DNA"/>
</dbReference>
<dbReference type="RefSeq" id="WP_011973828.1">
    <property type="nucleotide sequence ID" value="NC_009635.1"/>
</dbReference>
<dbReference type="SMR" id="A6UW24"/>
<dbReference type="STRING" id="419665.Maeo_1119"/>
<dbReference type="GeneID" id="5326880"/>
<dbReference type="KEGG" id="mae:Maeo_1119"/>
<dbReference type="eggNOG" id="arCOG01983">
    <property type="taxonomic scope" value="Archaea"/>
</dbReference>
<dbReference type="HOGENOM" id="CLU_076364_2_0_2"/>
<dbReference type="OrthoDB" id="27513at2157"/>
<dbReference type="UniPathway" id="UPA00035">
    <property type="reaction ID" value="UER00042"/>
</dbReference>
<dbReference type="Proteomes" id="UP000001106">
    <property type="component" value="Chromosome"/>
</dbReference>
<dbReference type="GO" id="GO:0004640">
    <property type="term" value="F:phosphoribosylanthranilate isomerase activity"/>
    <property type="evidence" value="ECO:0007669"/>
    <property type="project" value="UniProtKB-UniRule"/>
</dbReference>
<dbReference type="GO" id="GO:0000162">
    <property type="term" value="P:L-tryptophan biosynthetic process"/>
    <property type="evidence" value="ECO:0007669"/>
    <property type="project" value="UniProtKB-UniRule"/>
</dbReference>
<dbReference type="CDD" id="cd00405">
    <property type="entry name" value="PRAI"/>
    <property type="match status" value="1"/>
</dbReference>
<dbReference type="Gene3D" id="3.20.20.70">
    <property type="entry name" value="Aldolase class I"/>
    <property type="match status" value="1"/>
</dbReference>
<dbReference type="HAMAP" id="MF_00135">
    <property type="entry name" value="PRAI"/>
    <property type="match status" value="1"/>
</dbReference>
<dbReference type="InterPro" id="IPR013785">
    <property type="entry name" value="Aldolase_TIM"/>
</dbReference>
<dbReference type="InterPro" id="IPR001240">
    <property type="entry name" value="PRAI_dom"/>
</dbReference>
<dbReference type="InterPro" id="IPR011060">
    <property type="entry name" value="RibuloseP-bd_barrel"/>
</dbReference>
<dbReference type="InterPro" id="IPR044643">
    <property type="entry name" value="TrpF_fam"/>
</dbReference>
<dbReference type="NCBIfam" id="NF002304">
    <property type="entry name" value="PRK01222.2-4"/>
    <property type="match status" value="1"/>
</dbReference>
<dbReference type="PANTHER" id="PTHR42894">
    <property type="entry name" value="N-(5'-PHOSPHORIBOSYL)ANTHRANILATE ISOMERASE"/>
    <property type="match status" value="1"/>
</dbReference>
<dbReference type="PANTHER" id="PTHR42894:SF1">
    <property type="entry name" value="N-(5'-PHOSPHORIBOSYL)ANTHRANILATE ISOMERASE"/>
    <property type="match status" value="1"/>
</dbReference>
<dbReference type="Pfam" id="PF00697">
    <property type="entry name" value="PRAI"/>
    <property type="match status" value="1"/>
</dbReference>
<dbReference type="SUPFAM" id="SSF51366">
    <property type="entry name" value="Ribulose-phoshate binding barrel"/>
    <property type="match status" value="1"/>
</dbReference>
<gene>
    <name evidence="1" type="primary">trpF</name>
    <name type="ordered locus">Maeo_1119</name>
</gene>
<protein>
    <recommendedName>
        <fullName evidence="1">N-(5'-phosphoribosyl)anthranilate isomerase</fullName>
        <shortName evidence="1">PRAI</shortName>
        <ecNumber evidence="1">5.3.1.24</ecNumber>
    </recommendedName>
</protein>
<accession>A6UW24</accession>
<feature type="chain" id="PRO_1000057875" description="N-(5'-phosphoribosyl)anthranilate isomerase">
    <location>
        <begin position="1"/>
        <end position="210"/>
    </location>
</feature>
<name>TRPF_META3</name>
<comment type="catalytic activity">
    <reaction evidence="1">
        <text>N-(5-phospho-beta-D-ribosyl)anthranilate = 1-(2-carboxyphenylamino)-1-deoxy-D-ribulose 5-phosphate</text>
        <dbReference type="Rhea" id="RHEA:21540"/>
        <dbReference type="ChEBI" id="CHEBI:18277"/>
        <dbReference type="ChEBI" id="CHEBI:58613"/>
        <dbReference type="EC" id="5.3.1.24"/>
    </reaction>
</comment>
<comment type="pathway">
    <text evidence="1">Amino-acid biosynthesis; L-tryptophan biosynthesis; L-tryptophan from chorismate: step 3/5.</text>
</comment>
<comment type="similarity">
    <text evidence="1">Belongs to the TrpF family.</text>
</comment>
<reference key="1">
    <citation type="submission" date="2007-06" db="EMBL/GenBank/DDBJ databases">
        <title>Complete sequence of Methanococcus aeolicus Nankai-3.</title>
        <authorList>
            <consortium name="US DOE Joint Genome Institute"/>
            <person name="Copeland A."/>
            <person name="Lucas S."/>
            <person name="Lapidus A."/>
            <person name="Barry K."/>
            <person name="Glavina del Rio T."/>
            <person name="Dalin E."/>
            <person name="Tice H."/>
            <person name="Pitluck S."/>
            <person name="Chain P."/>
            <person name="Malfatti S."/>
            <person name="Shin M."/>
            <person name="Vergez L."/>
            <person name="Schmutz J."/>
            <person name="Larimer F."/>
            <person name="Land M."/>
            <person name="Hauser L."/>
            <person name="Kyrpides N."/>
            <person name="Lykidis A."/>
            <person name="Sieprawska-Lupa M."/>
            <person name="Whitman W.B."/>
            <person name="Richardson P."/>
        </authorList>
    </citation>
    <scope>NUCLEOTIDE SEQUENCE [LARGE SCALE GENOMIC DNA]</scope>
    <source>
        <strain>ATCC BAA-1280 / DSM 17508 / OCM 812 / Nankai-3</strain>
    </source>
</reference>